<feature type="chain" id="PRO_0000168001" description="Small ribosomal subunit protein bS20">
    <location>
        <begin position="1"/>
        <end position="86"/>
    </location>
</feature>
<feature type="region of interest" description="Disordered" evidence="2">
    <location>
        <begin position="1"/>
        <end position="25"/>
    </location>
</feature>
<protein>
    <recommendedName>
        <fullName evidence="1">Small ribosomal subunit protein bS20</fullName>
    </recommendedName>
    <alternativeName>
        <fullName evidence="3">30S ribosomal protein S20</fullName>
    </alternativeName>
</protein>
<sequence length="86" mass="9494">MANIKSQMKRIRTNEAARKRNQSVKSALRTAIRSFREAAEAGDKDKAAERLQFASRKLDKAASKGVIHPNQAANKKSALALAFNKL</sequence>
<comment type="function">
    <text evidence="1">Binds directly to 16S ribosomal RNA.</text>
</comment>
<comment type="similarity">
    <text evidence="1">Belongs to the bacterial ribosomal protein bS20 family.</text>
</comment>
<organism>
    <name type="scientific">Nocardia farcinica (strain IFM 10152)</name>
    <dbReference type="NCBI Taxonomy" id="247156"/>
    <lineage>
        <taxon>Bacteria</taxon>
        <taxon>Bacillati</taxon>
        <taxon>Actinomycetota</taxon>
        <taxon>Actinomycetes</taxon>
        <taxon>Mycobacteriales</taxon>
        <taxon>Nocardiaceae</taxon>
        <taxon>Nocardia</taxon>
    </lineage>
</organism>
<dbReference type="EMBL" id="AP006618">
    <property type="protein sequence ID" value="BAD56241.1"/>
    <property type="molecule type" value="Genomic_DNA"/>
</dbReference>
<dbReference type="RefSeq" id="WP_011207926.1">
    <property type="nucleotide sequence ID" value="NC_006361.1"/>
</dbReference>
<dbReference type="SMR" id="Q5Z000"/>
<dbReference type="STRING" id="247156.NFA_13960"/>
<dbReference type="GeneID" id="61132214"/>
<dbReference type="KEGG" id="nfa:NFA_13960"/>
<dbReference type="eggNOG" id="COG0268">
    <property type="taxonomic scope" value="Bacteria"/>
</dbReference>
<dbReference type="HOGENOM" id="CLU_160655_0_1_11"/>
<dbReference type="OrthoDB" id="9807974at2"/>
<dbReference type="Proteomes" id="UP000006820">
    <property type="component" value="Chromosome"/>
</dbReference>
<dbReference type="GO" id="GO:0005829">
    <property type="term" value="C:cytosol"/>
    <property type="evidence" value="ECO:0007669"/>
    <property type="project" value="TreeGrafter"/>
</dbReference>
<dbReference type="GO" id="GO:0015935">
    <property type="term" value="C:small ribosomal subunit"/>
    <property type="evidence" value="ECO:0007669"/>
    <property type="project" value="TreeGrafter"/>
</dbReference>
<dbReference type="GO" id="GO:0070181">
    <property type="term" value="F:small ribosomal subunit rRNA binding"/>
    <property type="evidence" value="ECO:0007669"/>
    <property type="project" value="TreeGrafter"/>
</dbReference>
<dbReference type="GO" id="GO:0003735">
    <property type="term" value="F:structural constituent of ribosome"/>
    <property type="evidence" value="ECO:0007669"/>
    <property type="project" value="InterPro"/>
</dbReference>
<dbReference type="GO" id="GO:0006412">
    <property type="term" value="P:translation"/>
    <property type="evidence" value="ECO:0007669"/>
    <property type="project" value="UniProtKB-UniRule"/>
</dbReference>
<dbReference type="FunFam" id="1.20.58.110:FF:000001">
    <property type="entry name" value="30S ribosomal protein S20"/>
    <property type="match status" value="1"/>
</dbReference>
<dbReference type="Gene3D" id="1.20.58.110">
    <property type="entry name" value="Ribosomal protein S20"/>
    <property type="match status" value="1"/>
</dbReference>
<dbReference type="HAMAP" id="MF_00500">
    <property type="entry name" value="Ribosomal_bS20"/>
    <property type="match status" value="1"/>
</dbReference>
<dbReference type="InterPro" id="IPR002583">
    <property type="entry name" value="Ribosomal_bS20"/>
</dbReference>
<dbReference type="InterPro" id="IPR036510">
    <property type="entry name" value="Ribosomal_bS20_sf"/>
</dbReference>
<dbReference type="NCBIfam" id="TIGR00029">
    <property type="entry name" value="S20"/>
    <property type="match status" value="1"/>
</dbReference>
<dbReference type="PANTHER" id="PTHR33398">
    <property type="entry name" value="30S RIBOSOMAL PROTEIN S20"/>
    <property type="match status" value="1"/>
</dbReference>
<dbReference type="PANTHER" id="PTHR33398:SF1">
    <property type="entry name" value="SMALL RIBOSOMAL SUBUNIT PROTEIN BS20C"/>
    <property type="match status" value="1"/>
</dbReference>
<dbReference type="Pfam" id="PF01649">
    <property type="entry name" value="Ribosomal_S20p"/>
    <property type="match status" value="1"/>
</dbReference>
<dbReference type="SUPFAM" id="SSF46992">
    <property type="entry name" value="Ribosomal protein S20"/>
    <property type="match status" value="1"/>
</dbReference>
<proteinExistence type="inferred from homology"/>
<accession>Q5Z000</accession>
<evidence type="ECO:0000255" key="1">
    <source>
        <dbReference type="HAMAP-Rule" id="MF_00500"/>
    </source>
</evidence>
<evidence type="ECO:0000256" key="2">
    <source>
        <dbReference type="SAM" id="MobiDB-lite"/>
    </source>
</evidence>
<evidence type="ECO:0000305" key="3"/>
<keyword id="KW-1185">Reference proteome</keyword>
<keyword id="KW-0687">Ribonucleoprotein</keyword>
<keyword id="KW-0689">Ribosomal protein</keyword>
<keyword id="KW-0694">RNA-binding</keyword>
<keyword id="KW-0699">rRNA-binding</keyword>
<gene>
    <name evidence="1" type="primary">rpsT</name>
    <name type="ordered locus">NFA_13960</name>
</gene>
<reference key="1">
    <citation type="journal article" date="2004" name="Proc. Natl. Acad. Sci. U.S.A.">
        <title>The complete genomic sequence of Nocardia farcinica IFM 10152.</title>
        <authorList>
            <person name="Ishikawa J."/>
            <person name="Yamashita A."/>
            <person name="Mikami Y."/>
            <person name="Hoshino Y."/>
            <person name="Kurita H."/>
            <person name="Hotta K."/>
            <person name="Shiba T."/>
            <person name="Hattori M."/>
        </authorList>
    </citation>
    <scope>NUCLEOTIDE SEQUENCE [LARGE SCALE GENOMIC DNA]</scope>
    <source>
        <strain>IFM 10152</strain>
    </source>
</reference>
<name>RS20_NOCFA</name>